<keyword id="KW-0007">Acetylation</keyword>
<keyword id="KW-0067">ATP-binding</keyword>
<keyword id="KW-0143">Chaperone</keyword>
<keyword id="KW-0963">Cytoplasm</keyword>
<keyword id="KW-0903">Direct protein sequencing</keyword>
<keyword id="KW-0256">Endoplasmic reticulum</keyword>
<keyword id="KW-0378">Hydrolase</keyword>
<keyword id="KW-1017">Isopeptide bond</keyword>
<keyword id="KW-0488">Methylation</keyword>
<keyword id="KW-0944">Nitration</keyword>
<keyword id="KW-0547">Nucleotide-binding</keyword>
<keyword id="KW-0597">Phosphoprotein</keyword>
<keyword id="KW-1185">Reference proteome</keyword>
<keyword id="KW-0732">Signal</keyword>
<keyword id="KW-0832">Ubl conjugation</keyword>
<gene>
    <name evidence="24" type="primary">Hspa5</name>
    <name evidence="22" type="synonym">Grp78</name>
</gene>
<protein>
    <recommendedName>
        <fullName evidence="23">Endoplasmic reticulum chaperone BiP</fullName>
        <ecNumber evidence="4">3.6.4.10</ecNumber>
    </recommendedName>
    <alternativeName>
        <fullName evidence="22">78 kDa glucose-regulated protein</fullName>
        <shortName evidence="22">GRP-78</shortName>
    </alternativeName>
    <alternativeName>
        <fullName evidence="21">Binding-immunoglobulin protein</fullName>
        <shortName evidence="21">BiP</shortName>
    </alternativeName>
    <alternativeName>
        <fullName evidence="23">Heat shock protein 70 family protein 5</fullName>
        <shortName evidence="23">HSP70 family protein 5</shortName>
    </alternativeName>
    <alternativeName>
        <fullName evidence="24">Heat shock protein family A member 5</fullName>
    </alternativeName>
    <alternativeName>
        <fullName evidence="21">Immunoglobulin heavy chain-binding protein</fullName>
    </alternativeName>
</protein>
<feature type="signal peptide" evidence="17 20">
    <location>
        <begin position="1"/>
        <end position="19"/>
    </location>
</feature>
<feature type="chain" id="PRO_0000013568" description="Endoplasmic reticulum chaperone BiP">
    <location>
        <begin position="20"/>
        <end position="655"/>
    </location>
</feature>
<feature type="region of interest" description="Required for interaction with ELAPOR1" evidence="4">
    <location>
        <begin position="1"/>
        <end position="81"/>
    </location>
</feature>
<feature type="region of interest" description="Nucleotide-binding (NBD)" evidence="4">
    <location>
        <begin position="126"/>
        <end position="281"/>
    </location>
</feature>
<feature type="region of interest" description="Interdomain linker" evidence="1">
    <location>
        <begin position="410"/>
        <end position="420"/>
    </location>
</feature>
<feature type="region of interest" description="Substrate-binding (SBD)" evidence="4">
    <location>
        <begin position="421"/>
        <end position="501"/>
    </location>
</feature>
<feature type="region of interest" description="Disordered" evidence="6">
    <location>
        <begin position="632"/>
        <end position="655"/>
    </location>
</feature>
<feature type="short sequence motif" description="Prevents secretion from ER">
    <location>
        <begin position="652"/>
        <end position="655"/>
    </location>
</feature>
<feature type="compositionally biased region" description="Acidic residues" evidence="6">
    <location>
        <begin position="645"/>
        <end position="655"/>
    </location>
</feature>
<feature type="binding site" evidence="4">
    <location>
        <begin position="37"/>
        <end position="40"/>
    </location>
    <ligand>
        <name>ATP</name>
        <dbReference type="ChEBI" id="CHEBI:30616"/>
    </ligand>
</feature>
<feature type="binding site" evidence="4">
    <location>
        <position position="97"/>
    </location>
    <ligand>
        <name>ATP</name>
        <dbReference type="ChEBI" id="CHEBI:30616"/>
    </ligand>
</feature>
<feature type="binding site" evidence="4">
    <location>
        <begin position="228"/>
        <end position="230"/>
    </location>
    <ligand>
        <name>ATP</name>
        <dbReference type="ChEBI" id="CHEBI:30616"/>
    </ligand>
</feature>
<feature type="binding site" evidence="4">
    <location>
        <begin position="294"/>
        <end position="301"/>
    </location>
    <ligand>
        <name>ATP</name>
        <dbReference type="ChEBI" id="CHEBI:30616"/>
    </ligand>
</feature>
<feature type="binding site" evidence="4">
    <location>
        <begin position="365"/>
        <end position="368"/>
    </location>
    <ligand>
        <name>ATP</name>
        <dbReference type="ChEBI" id="CHEBI:30616"/>
    </ligand>
</feature>
<feature type="modified residue" description="Phosphoserine" evidence="2">
    <location>
        <position position="87"/>
    </location>
</feature>
<feature type="modified residue" description="N6-acetyllysine" evidence="28">
    <location>
        <position position="126"/>
    </location>
</feature>
<feature type="modified residue" description="3'-nitrotyrosine" evidence="25">
    <location>
        <position position="161"/>
    </location>
</feature>
<feature type="modified residue" description="N6-acetyllysine" evidence="28">
    <location>
        <position position="214"/>
    </location>
</feature>
<feature type="modified residue" description="N6-acetyllysine" evidence="3">
    <location>
        <position position="272"/>
    </location>
</feature>
<feature type="modified residue" description="N6-acetyllysine" evidence="28">
    <location>
        <position position="327"/>
    </location>
</feature>
<feature type="modified residue" description="N6-acetyllysine; alternate" evidence="28">
    <location>
        <position position="354"/>
    </location>
</feature>
<feature type="modified residue" description="N6-succinyllysine" evidence="28">
    <location>
        <position position="448"/>
    </location>
</feature>
<feature type="modified residue" description="Omega-N-methylarginine" evidence="3">
    <location>
        <position position="493"/>
    </location>
</feature>
<feature type="modified residue" description="O-AMP-threonine; alternate" evidence="1">
    <location>
        <position position="519"/>
    </location>
</feature>
<feature type="modified residue" description="Phosphothreonine; alternate" evidence="4">
    <location>
        <position position="519"/>
    </location>
</feature>
<feature type="modified residue" description="N6,N6,N6-trimethyllysine; by METTL21A; in vitro" evidence="15">
    <location>
        <position position="586"/>
    </location>
</feature>
<feature type="modified residue" description="N6,N6-dimethyllysine; alternate" evidence="4">
    <location>
        <position position="586"/>
    </location>
</feature>
<feature type="modified residue" description="N6-methyllysine; alternate" evidence="4">
    <location>
        <position position="586"/>
    </location>
</feature>
<feature type="modified residue" description="N6-methyllysine" evidence="4">
    <location>
        <position position="592"/>
    </location>
</feature>
<feature type="modified residue" description="Phosphothreonine" evidence="27">
    <location>
        <position position="644"/>
    </location>
</feature>
<feature type="modified residue" description="Phosphothreonine" evidence="27">
    <location>
        <position position="649"/>
    </location>
</feature>
<feature type="modified residue" description="Phosphoserine" evidence="26 27">
    <location>
        <position position="650"/>
    </location>
</feature>
<feature type="cross-link" description="Glycyl lysine isopeptide (Lys-Gly) (interchain with G-Cter in SUMO2)" evidence="4">
    <location>
        <position position="353"/>
    </location>
</feature>
<feature type="cross-link" description="Glycyl lysine isopeptide (Lys-Gly) (interchain with G-Cter in SUMO1); alternate" evidence="4">
    <location>
        <position position="354"/>
    </location>
</feature>
<feature type="sequence conflict" description="In Ref. 3; BAA11462." evidence="23" ref="3">
    <original>V</original>
    <variation>F</variation>
    <location>
        <position position="43"/>
    </location>
</feature>
<feature type="sequence conflict" description="In Ref. 3; BAA11462." evidence="23" ref="3">
    <original>V</original>
    <variation>W</variation>
    <location>
        <position position="245"/>
    </location>
</feature>
<feature type="sequence conflict" description="In Ref. 3; BAA11462." evidence="23" ref="3">
    <original>E</original>
    <variation>G</variation>
    <location>
        <position position="329"/>
    </location>
</feature>
<feature type="sequence conflict" description="In Ref. 3; BAA11462." evidence="23" ref="3">
    <original>V</original>
    <variation>A</variation>
    <location>
        <position position="361"/>
    </location>
</feature>
<feature type="sequence conflict" description="In Ref. 1; CAA05361." evidence="23" ref="1">
    <original>T</original>
    <variation>R</variation>
    <location>
        <position position="474"/>
    </location>
</feature>
<feature type="sequence conflict" description="In Ref. 9; AAA37742." evidence="23" ref="9">
    <original>D</original>
    <variation>G</variation>
    <location>
        <position position="591"/>
    </location>
</feature>
<feature type="sequence conflict" description="In Ref. 2; AA sequence." evidence="23" ref="2">
    <original>E</original>
    <variation>K</variation>
    <location>
        <position position="596"/>
    </location>
</feature>
<dbReference type="EC" id="3.6.4.10" evidence="4"/>
<dbReference type="EMBL" id="AJ002387">
    <property type="protein sequence ID" value="CAA05361.1"/>
    <property type="molecule type" value="mRNA"/>
</dbReference>
<dbReference type="EMBL" id="M19351">
    <property type="protein sequence ID" value="AAA37315.1"/>
    <property type="molecule type" value="mRNA"/>
</dbReference>
<dbReference type="EMBL" id="D78645">
    <property type="protein sequence ID" value="BAA11462.1"/>
    <property type="molecule type" value="mRNA"/>
</dbReference>
<dbReference type="EMBL" id="AK076079">
    <property type="protein sequence ID" value="BAC36166.1"/>
    <property type="molecule type" value="mRNA"/>
</dbReference>
<dbReference type="EMBL" id="AK146647">
    <property type="protein sequence ID" value="BAE27328.1"/>
    <property type="molecule type" value="mRNA"/>
</dbReference>
<dbReference type="EMBL" id="AK148539">
    <property type="protein sequence ID" value="BAE28609.1"/>
    <property type="molecule type" value="mRNA"/>
</dbReference>
<dbReference type="EMBL" id="AK151647">
    <property type="protein sequence ID" value="BAE30576.1"/>
    <property type="molecule type" value="mRNA"/>
</dbReference>
<dbReference type="EMBL" id="AK152020">
    <property type="protein sequence ID" value="BAE30882.1"/>
    <property type="molecule type" value="mRNA"/>
</dbReference>
<dbReference type="EMBL" id="AK166739">
    <property type="protein sequence ID" value="BAE38982.1"/>
    <property type="molecule type" value="mRNA"/>
</dbReference>
<dbReference type="EMBL" id="AK169034">
    <property type="protein sequence ID" value="BAE40825.1"/>
    <property type="molecule type" value="mRNA"/>
</dbReference>
<dbReference type="EMBL" id="BC050927">
    <property type="protein sequence ID" value="AAH50927.1"/>
    <property type="molecule type" value="mRNA"/>
</dbReference>
<dbReference type="EMBL" id="U16277">
    <property type="protein sequence ID" value="AAA76734.1"/>
    <property type="molecule type" value="Genomic_DNA"/>
</dbReference>
<dbReference type="EMBL" id="M30779">
    <property type="protein sequence ID" value="AAA37742.1"/>
    <property type="molecule type" value="mRNA"/>
</dbReference>
<dbReference type="CCDS" id="CCDS15950.1"/>
<dbReference type="PIR" id="A37048">
    <property type="entry name" value="A37048"/>
</dbReference>
<dbReference type="RefSeq" id="NP_001156906.1">
    <property type="nucleotide sequence ID" value="NM_001163434.1"/>
</dbReference>
<dbReference type="RefSeq" id="NP_071705.3">
    <property type="nucleotide sequence ID" value="NM_022310.3"/>
</dbReference>
<dbReference type="SMR" id="P20029"/>
<dbReference type="BioGRID" id="200078">
    <property type="interactions" value="105"/>
</dbReference>
<dbReference type="CORUM" id="P20029"/>
<dbReference type="DIP" id="DIP-32341N"/>
<dbReference type="FunCoup" id="P20029">
    <property type="interactions" value="2863"/>
</dbReference>
<dbReference type="IntAct" id="P20029">
    <property type="interactions" value="37"/>
</dbReference>
<dbReference type="MINT" id="P20029"/>
<dbReference type="STRING" id="10090.ENSMUSP00000028222"/>
<dbReference type="CarbonylDB" id="P20029"/>
<dbReference type="GlyGen" id="P20029">
    <property type="glycosylation" value="1 site, 1 O-linked glycan (1 site)"/>
</dbReference>
<dbReference type="iPTMnet" id="P20029"/>
<dbReference type="PhosphoSitePlus" id="P20029"/>
<dbReference type="SwissPalm" id="P20029"/>
<dbReference type="REPRODUCTION-2DPAGE" id="IPI00319992"/>
<dbReference type="REPRODUCTION-2DPAGE" id="P20029"/>
<dbReference type="CPTAC" id="non-CPTAC-3387"/>
<dbReference type="CPTAC" id="non-CPTAC-3388"/>
<dbReference type="jPOST" id="P20029"/>
<dbReference type="PaxDb" id="10090-ENSMUSP00000097747"/>
<dbReference type="PeptideAtlas" id="P20029"/>
<dbReference type="ProteomicsDB" id="273615"/>
<dbReference type="Pumba" id="P20029"/>
<dbReference type="TopDownProteomics" id="P20029"/>
<dbReference type="Antibodypedia" id="3926">
    <property type="antibodies" value="1737 antibodies from 49 providers"/>
</dbReference>
<dbReference type="DNASU" id="14828"/>
<dbReference type="Ensembl" id="ENSMUST00000028222.13">
    <property type="protein sequence ID" value="ENSMUSP00000028222.7"/>
    <property type="gene ID" value="ENSMUSG00000026864.14"/>
</dbReference>
<dbReference type="Ensembl" id="ENSMUST00000100171.3">
    <property type="protein sequence ID" value="ENSMUSP00000097747.3"/>
    <property type="gene ID" value="ENSMUSG00000026864.14"/>
</dbReference>
<dbReference type="GeneID" id="14828"/>
<dbReference type="KEGG" id="mmu:14828"/>
<dbReference type="UCSC" id="uc008jis.2">
    <property type="organism name" value="mouse"/>
</dbReference>
<dbReference type="AGR" id="MGI:95835"/>
<dbReference type="CTD" id="3309"/>
<dbReference type="MGI" id="MGI:95835">
    <property type="gene designation" value="Hspa5"/>
</dbReference>
<dbReference type="VEuPathDB" id="HostDB:ENSMUSG00000026864"/>
<dbReference type="eggNOG" id="KOG0100">
    <property type="taxonomic scope" value="Eukaryota"/>
</dbReference>
<dbReference type="GeneTree" id="ENSGT00940000154787"/>
<dbReference type="HOGENOM" id="CLU_005965_3_0_1"/>
<dbReference type="InParanoid" id="P20029"/>
<dbReference type="OMA" id="VQRDIKH"/>
<dbReference type="OrthoDB" id="2401965at2759"/>
<dbReference type="PhylomeDB" id="P20029"/>
<dbReference type="TreeFam" id="TF105044"/>
<dbReference type="Reactome" id="R-MMU-3371453">
    <property type="pathway name" value="Regulation of HSF1-mediated heat shock response"/>
</dbReference>
<dbReference type="Reactome" id="R-MMU-983170">
    <property type="pathway name" value="Antigen Presentation: Folding, assembly and peptide loading of class I MHC"/>
</dbReference>
<dbReference type="BioGRID-ORCS" id="14828">
    <property type="hits" value="29 hits in 74 CRISPR screens"/>
</dbReference>
<dbReference type="CD-CODE" id="8F289D40">
    <property type="entry name" value="ELVA"/>
</dbReference>
<dbReference type="CD-CODE" id="CE726F99">
    <property type="entry name" value="Postsynaptic density"/>
</dbReference>
<dbReference type="ChiTaRS" id="Hspa5">
    <property type="organism name" value="mouse"/>
</dbReference>
<dbReference type="PRO" id="PR:P20029"/>
<dbReference type="Proteomes" id="UP000000589">
    <property type="component" value="Chromosome 2"/>
</dbReference>
<dbReference type="RNAct" id="P20029">
    <property type="molecule type" value="protein"/>
</dbReference>
<dbReference type="Bgee" id="ENSMUSG00000026864">
    <property type="expression patterns" value="Expressed in prostate gland ventral lobe and 266 other cell types or tissues"/>
</dbReference>
<dbReference type="ExpressionAtlas" id="P20029">
    <property type="expression patterns" value="baseline and differential"/>
</dbReference>
<dbReference type="GO" id="GO:0009986">
    <property type="term" value="C:cell surface"/>
    <property type="evidence" value="ECO:0000314"/>
    <property type="project" value="MGI"/>
</dbReference>
<dbReference type="GO" id="GO:0008180">
    <property type="term" value="C:COP9 signalosome"/>
    <property type="evidence" value="ECO:0007669"/>
    <property type="project" value="Ensembl"/>
</dbReference>
<dbReference type="GO" id="GO:0005829">
    <property type="term" value="C:cytosol"/>
    <property type="evidence" value="ECO:0000250"/>
    <property type="project" value="UniProtKB"/>
</dbReference>
<dbReference type="GO" id="GO:0005783">
    <property type="term" value="C:endoplasmic reticulum"/>
    <property type="evidence" value="ECO:0000314"/>
    <property type="project" value="ParkinsonsUK-UCL"/>
</dbReference>
<dbReference type="GO" id="GO:0034663">
    <property type="term" value="C:endoplasmic reticulum chaperone complex"/>
    <property type="evidence" value="ECO:0000314"/>
    <property type="project" value="ParkinsonsUK-UCL"/>
</dbReference>
<dbReference type="GO" id="GO:0005788">
    <property type="term" value="C:endoplasmic reticulum lumen"/>
    <property type="evidence" value="ECO:0000314"/>
    <property type="project" value="BHF-UCL"/>
</dbReference>
<dbReference type="GO" id="GO:0005789">
    <property type="term" value="C:endoplasmic reticulum membrane"/>
    <property type="evidence" value="ECO:0000314"/>
    <property type="project" value="MGI"/>
</dbReference>
<dbReference type="GO" id="GO:0005793">
    <property type="term" value="C:endoplasmic reticulum-Golgi intermediate compartment"/>
    <property type="evidence" value="ECO:0000314"/>
    <property type="project" value="MGI"/>
</dbReference>
<dbReference type="GO" id="GO:0005576">
    <property type="term" value="C:extracellular region"/>
    <property type="evidence" value="ECO:0000304"/>
    <property type="project" value="Reactome"/>
</dbReference>
<dbReference type="GO" id="GO:0042470">
    <property type="term" value="C:melanosome"/>
    <property type="evidence" value="ECO:0007669"/>
    <property type="project" value="UniProtKB-SubCell"/>
</dbReference>
<dbReference type="GO" id="GO:0016020">
    <property type="term" value="C:membrane"/>
    <property type="evidence" value="ECO:0000266"/>
    <property type="project" value="MGI"/>
</dbReference>
<dbReference type="GO" id="GO:0030496">
    <property type="term" value="C:midbody"/>
    <property type="evidence" value="ECO:0007669"/>
    <property type="project" value="Ensembl"/>
</dbReference>
<dbReference type="GO" id="GO:0005739">
    <property type="term" value="C:mitochondrion"/>
    <property type="evidence" value="ECO:0000250"/>
    <property type="project" value="UniProtKB"/>
</dbReference>
<dbReference type="GO" id="GO:0043209">
    <property type="term" value="C:myelin sheath"/>
    <property type="evidence" value="ECO:0007005"/>
    <property type="project" value="UniProtKB"/>
</dbReference>
<dbReference type="GO" id="GO:0005886">
    <property type="term" value="C:plasma membrane"/>
    <property type="evidence" value="ECO:0000314"/>
    <property type="project" value="MGI"/>
</dbReference>
<dbReference type="GO" id="GO:0005524">
    <property type="term" value="F:ATP binding"/>
    <property type="evidence" value="ECO:0007669"/>
    <property type="project" value="UniProtKB-KW"/>
</dbReference>
<dbReference type="GO" id="GO:0016887">
    <property type="term" value="F:ATP hydrolysis activity"/>
    <property type="evidence" value="ECO:0000250"/>
    <property type="project" value="UniProtKB"/>
</dbReference>
<dbReference type="GO" id="GO:0140662">
    <property type="term" value="F:ATP-dependent protein folding chaperone"/>
    <property type="evidence" value="ECO:0007669"/>
    <property type="project" value="InterPro"/>
</dbReference>
<dbReference type="GO" id="GO:0051787">
    <property type="term" value="F:misfolded protein binding"/>
    <property type="evidence" value="ECO:0000314"/>
    <property type="project" value="BHF-UCL"/>
</dbReference>
<dbReference type="GO" id="GO:0019904">
    <property type="term" value="F:protein domain specific binding"/>
    <property type="evidence" value="ECO:0007669"/>
    <property type="project" value="Ensembl"/>
</dbReference>
<dbReference type="GO" id="GO:0044183">
    <property type="term" value="F:protein folding chaperone"/>
    <property type="evidence" value="ECO:0000314"/>
    <property type="project" value="MGI"/>
</dbReference>
<dbReference type="GO" id="GO:0030291">
    <property type="term" value="F:protein serine/threonine kinase inhibitor activity"/>
    <property type="evidence" value="ECO:0007669"/>
    <property type="project" value="Ensembl"/>
</dbReference>
<dbReference type="GO" id="GO:0043022">
    <property type="term" value="F:ribosome binding"/>
    <property type="evidence" value="ECO:0000314"/>
    <property type="project" value="MGI"/>
</dbReference>
<dbReference type="GO" id="GO:0031625">
    <property type="term" value="F:ubiquitin protein ligase binding"/>
    <property type="evidence" value="ECO:0007669"/>
    <property type="project" value="Ensembl"/>
</dbReference>
<dbReference type="GO" id="GO:0042149">
    <property type="term" value="P:cellular response to glucose starvation"/>
    <property type="evidence" value="ECO:0007669"/>
    <property type="project" value="Ensembl"/>
</dbReference>
<dbReference type="GO" id="GO:0071353">
    <property type="term" value="P:cellular response to interleukin-4"/>
    <property type="evidence" value="ECO:0000314"/>
    <property type="project" value="MGI"/>
</dbReference>
<dbReference type="GO" id="GO:0021680">
    <property type="term" value="P:cerebellar Purkinje cell layer development"/>
    <property type="evidence" value="ECO:0000315"/>
    <property type="project" value="BHF-UCL"/>
</dbReference>
<dbReference type="GO" id="GO:0021589">
    <property type="term" value="P:cerebellum structural organization"/>
    <property type="evidence" value="ECO:0000315"/>
    <property type="project" value="BHF-UCL"/>
</dbReference>
<dbReference type="GO" id="GO:0030968">
    <property type="term" value="P:endoplasmic reticulum unfolded protein response"/>
    <property type="evidence" value="ECO:0000315"/>
    <property type="project" value="BHF-UCL"/>
</dbReference>
<dbReference type="GO" id="GO:0006983">
    <property type="term" value="P:ER overload response"/>
    <property type="evidence" value="ECO:0000314"/>
    <property type="project" value="MGI"/>
</dbReference>
<dbReference type="GO" id="GO:0036498">
    <property type="term" value="P:IRE1-mediated unfolded protein response"/>
    <property type="evidence" value="ECO:0000270"/>
    <property type="project" value="WormBase"/>
</dbReference>
<dbReference type="GO" id="GO:0035437">
    <property type="term" value="P:maintenance of protein localization in endoplasmic reticulum"/>
    <property type="evidence" value="ECO:0000250"/>
    <property type="project" value="UniProtKB"/>
</dbReference>
<dbReference type="GO" id="GO:0043066">
    <property type="term" value="P:negative regulation of apoptotic process"/>
    <property type="evidence" value="ECO:0007669"/>
    <property type="project" value="Ensembl"/>
</dbReference>
<dbReference type="GO" id="GO:1903895">
    <property type="term" value="P:negative regulation of IRE1-mediated unfolded protein response"/>
    <property type="evidence" value="ECO:0000250"/>
    <property type="project" value="UniProtKB"/>
</dbReference>
<dbReference type="GO" id="GO:1903898">
    <property type="term" value="P:negative regulation of PERK-mediated unfolded protein response"/>
    <property type="evidence" value="ECO:0007669"/>
    <property type="project" value="Ensembl"/>
</dbReference>
<dbReference type="GO" id="GO:0031333">
    <property type="term" value="P:negative regulation of protein-containing complex assembly"/>
    <property type="evidence" value="ECO:0000250"/>
    <property type="project" value="UniProtKB"/>
</dbReference>
<dbReference type="GO" id="GO:0030512">
    <property type="term" value="P:negative regulation of transforming growth factor beta receptor signaling pathway"/>
    <property type="evidence" value="ECO:0000316"/>
    <property type="project" value="MGI"/>
</dbReference>
<dbReference type="GO" id="GO:0030335">
    <property type="term" value="P:positive regulation of cell migration"/>
    <property type="evidence" value="ECO:0000250"/>
    <property type="project" value="UniProtKB"/>
</dbReference>
<dbReference type="GO" id="GO:0040019">
    <property type="term" value="P:positive regulation of embryonic development"/>
    <property type="evidence" value="ECO:0000304"/>
    <property type="project" value="BHF-UCL"/>
</dbReference>
<dbReference type="GO" id="GO:0031398">
    <property type="term" value="P:positive regulation of protein ubiquitination"/>
    <property type="evidence" value="ECO:0000315"/>
    <property type="project" value="BHF-UCL"/>
</dbReference>
<dbReference type="GO" id="GO:0031204">
    <property type="term" value="P:post-translational protein targeting to membrane, translocation"/>
    <property type="evidence" value="ECO:0000250"/>
    <property type="project" value="UniProtKB"/>
</dbReference>
<dbReference type="GO" id="GO:0051603">
    <property type="term" value="P:proteolysis involved in protein catabolic process"/>
    <property type="evidence" value="ECO:0000314"/>
    <property type="project" value="BHF-UCL"/>
</dbReference>
<dbReference type="GO" id="GO:0034976">
    <property type="term" value="P:response to endoplasmic reticulum stress"/>
    <property type="evidence" value="ECO:0000266"/>
    <property type="project" value="MGI"/>
</dbReference>
<dbReference type="CDD" id="cd10241">
    <property type="entry name" value="ASKHA_NBD_HSP70_BiP"/>
    <property type="match status" value="1"/>
</dbReference>
<dbReference type="FunFam" id="3.30.420.40:FF:000720">
    <property type="entry name" value="Endoplasmic reticulum chaperone BiP"/>
    <property type="match status" value="1"/>
</dbReference>
<dbReference type="FunFam" id="3.90.640.10:FF:000153">
    <property type="entry name" value="Endoplasmic reticulum chaperone BiP"/>
    <property type="match status" value="1"/>
</dbReference>
<dbReference type="FunFam" id="2.60.34.10:FF:000002">
    <property type="entry name" value="Heat shock 70 kDa"/>
    <property type="match status" value="1"/>
</dbReference>
<dbReference type="FunFam" id="3.30.30.30:FF:000001">
    <property type="entry name" value="heat shock 70 kDa protein-like"/>
    <property type="match status" value="1"/>
</dbReference>
<dbReference type="FunFam" id="1.20.1270.10:FF:000061">
    <property type="entry name" value="Heat shock protein family A (Hsp70) member 5"/>
    <property type="match status" value="1"/>
</dbReference>
<dbReference type="Gene3D" id="1.20.1270.10">
    <property type="match status" value="1"/>
</dbReference>
<dbReference type="Gene3D" id="3.30.420.40">
    <property type="match status" value="2"/>
</dbReference>
<dbReference type="Gene3D" id="3.90.640.10">
    <property type="entry name" value="Actin, Chain A, domain 4"/>
    <property type="match status" value="1"/>
</dbReference>
<dbReference type="Gene3D" id="2.60.34.10">
    <property type="entry name" value="Substrate Binding Domain Of DNAk, Chain A, domain 1"/>
    <property type="match status" value="1"/>
</dbReference>
<dbReference type="InterPro" id="IPR043129">
    <property type="entry name" value="ATPase_NBD"/>
</dbReference>
<dbReference type="InterPro" id="IPR042050">
    <property type="entry name" value="BIP_NBD"/>
</dbReference>
<dbReference type="InterPro" id="IPR018181">
    <property type="entry name" value="Heat_shock_70_CS"/>
</dbReference>
<dbReference type="InterPro" id="IPR029048">
    <property type="entry name" value="HSP70_C_sf"/>
</dbReference>
<dbReference type="InterPro" id="IPR029047">
    <property type="entry name" value="HSP70_peptide-bd_sf"/>
</dbReference>
<dbReference type="InterPro" id="IPR013126">
    <property type="entry name" value="Hsp_70_fam"/>
</dbReference>
<dbReference type="NCBIfam" id="NF001413">
    <property type="entry name" value="PRK00290.1"/>
    <property type="match status" value="1"/>
</dbReference>
<dbReference type="PANTHER" id="PTHR19375">
    <property type="entry name" value="HEAT SHOCK PROTEIN 70KDA"/>
    <property type="match status" value="1"/>
</dbReference>
<dbReference type="Pfam" id="PF00012">
    <property type="entry name" value="HSP70"/>
    <property type="match status" value="1"/>
</dbReference>
<dbReference type="PRINTS" id="PR00301">
    <property type="entry name" value="HEATSHOCK70"/>
</dbReference>
<dbReference type="SUPFAM" id="SSF53067">
    <property type="entry name" value="Actin-like ATPase domain"/>
    <property type="match status" value="2"/>
</dbReference>
<dbReference type="SUPFAM" id="SSF100934">
    <property type="entry name" value="Heat shock protein 70kD (HSP70), C-terminal subdomain"/>
    <property type="match status" value="1"/>
</dbReference>
<dbReference type="SUPFAM" id="SSF100920">
    <property type="entry name" value="Heat shock protein 70kD (HSP70), peptide-binding domain"/>
    <property type="match status" value="1"/>
</dbReference>
<dbReference type="PROSITE" id="PS00014">
    <property type="entry name" value="ER_TARGET"/>
    <property type="match status" value="1"/>
</dbReference>
<dbReference type="PROSITE" id="PS00297">
    <property type="entry name" value="HSP70_1"/>
    <property type="match status" value="1"/>
</dbReference>
<dbReference type="PROSITE" id="PS00329">
    <property type="entry name" value="HSP70_2"/>
    <property type="match status" value="1"/>
</dbReference>
<dbReference type="PROSITE" id="PS01036">
    <property type="entry name" value="HSP70_3"/>
    <property type="match status" value="1"/>
</dbReference>
<name>BIP_MOUSE</name>
<organism>
    <name type="scientific">Mus musculus</name>
    <name type="common">Mouse</name>
    <dbReference type="NCBI Taxonomy" id="10090"/>
    <lineage>
        <taxon>Eukaryota</taxon>
        <taxon>Metazoa</taxon>
        <taxon>Chordata</taxon>
        <taxon>Craniata</taxon>
        <taxon>Vertebrata</taxon>
        <taxon>Euteleostomi</taxon>
        <taxon>Mammalia</taxon>
        <taxon>Eutheria</taxon>
        <taxon>Euarchontoglires</taxon>
        <taxon>Glires</taxon>
        <taxon>Rodentia</taxon>
        <taxon>Myomorpha</taxon>
        <taxon>Muroidea</taxon>
        <taxon>Muridae</taxon>
        <taxon>Murinae</taxon>
        <taxon>Mus</taxon>
        <taxon>Mus</taxon>
    </lineage>
</organism>
<evidence type="ECO:0000250" key="1">
    <source>
        <dbReference type="UniProtKB" id="G3I8R9"/>
    </source>
</evidence>
<evidence type="ECO:0000250" key="2">
    <source>
        <dbReference type="UniProtKB" id="P06761"/>
    </source>
</evidence>
<evidence type="ECO:0000250" key="3">
    <source>
        <dbReference type="UniProtKB" id="P0DMV8"/>
    </source>
</evidence>
<evidence type="ECO:0000250" key="4">
    <source>
        <dbReference type="UniProtKB" id="P11021"/>
    </source>
</evidence>
<evidence type="ECO:0000255" key="5">
    <source>
        <dbReference type="PROSITE-ProRule" id="PRU10138"/>
    </source>
</evidence>
<evidence type="ECO:0000256" key="6">
    <source>
        <dbReference type="SAM" id="MobiDB-lite"/>
    </source>
</evidence>
<evidence type="ECO:0000269" key="7">
    <source>
    </source>
</evidence>
<evidence type="ECO:0000269" key="8">
    <source>
    </source>
</evidence>
<evidence type="ECO:0000269" key="9">
    <source>
    </source>
</evidence>
<evidence type="ECO:0000269" key="10">
    <source>
    </source>
</evidence>
<evidence type="ECO:0000269" key="11">
    <source>
    </source>
</evidence>
<evidence type="ECO:0000269" key="12">
    <source>
    </source>
</evidence>
<evidence type="ECO:0000269" key="13">
    <source>
    </source>
</evidence>
<evidence type="ECO:0000269" key="14">
    <source>
    </source>
</evidence>
<evidence type="ECO:0000269" key="15">
    <source>
    </source>
</evidence>
<evidence type="ECO:0000269" key="16">
    <source>
    </source>
</evidence>
<evidence type="ECO:0000269" key="17">
    <source>
    </source>
</evidence>
<evidence type="ECO:0000269" key="18">
    <source>
    </source>
</evidence>
<evidence type="ECO:0000269" key="19">
    <source>
    </source>
</evidence>
<evidence type="ECO:0000269" key="20">
    <source>
    </source>
</evidence>
<evidence type="ECO:0000303" key="21">
    <source>
    </source>
</evidence>
<evidence type="ECO:0000303" key="22">
    <source>
    </source>
</evidence>
<evidence type="ECO:0000305" key="23"/>
<evidence type="ECO:0000312" key="24">
    <source>
        <dbReference type="MGI" id="MGI:95835"/>
    </source>
</evidence>
<evidence type="ECO:0007744" key="25">
    <source>
    </source>
</evidence>
<evidence type="ECO:0007744" key="26">
    <source>
    </source>
</evidence>
<evidence type="ECO:0007744" key="27">
    <source>
    </source>
</evidence>
<evidence type="ECO:0007744" key="28">
    <source>
    </source>
</evidence>
<sequence length="655" mass="72422">MMKFTVVAAALLLLGAVRAEEEDKKEDVGTVVGIDLGTTYSCVGVFKNGRVEIIANDQGNRITPSYVAFTPEGERLIGDAAKNQLTSNPENTVFDAKRLIGRTWNDPSVQQDIKFLPFKVVEKKTKPYIQVDIGGGQTKTFAPEEISAMVLTKMKETAEAYLGKKVTHAVVTVPAYFNDAQRQATKDAGTIAGLNVMRIINEPTAAAIAYGLDKREGEKNILVFDLGGGTFDVSLLTIDNGVFEVVATNGDTHLGGEDFDQRVMEHFIKLYKKKTGKDVRKDNRAVQKLRREVEKAKRALSSQHQARIEIESFFEGEDFSETLTRAKFEELNMDLFRSTMKPVQKVLEDSDLKKSDIDEIVLVGGSTRIPKIQQLVKEFFNGKEPSRGINPDEAVAYGAAVQAGVLSGDQDTGDLVLLDVCPLTLGIETVGGVMTKLIPRNTVVPTKKSQIFSTASDNQPTVTIKVYEGERPLTKDNHLLGTFDLTGIPPAPRGVPQIEVTFEIDVNGILRVTAEDKGTGNKNKITITNDQNRLTPEEIERMVNDAEKFAEEDKKLKERIDTRNELESYAYSLKNQIGDKEKLGGKLSSEDKETMEKAVEEKIEWLESHQDADIEDFKAKKKELEEIVQPIISKLYGSGGPPPTGEEDTSEKDEL</sequence>
<reference key="1">
    <citation type="journal article" date="1988" name="Proc. Natl. Acad. Sci. U.S.A.">
        <title>cDNA cloning of the immunoglobulin heavy chain binding protein.</title>
        <authorList>
            <person name="Haas I.G."/>
            <person name="Meo T."/>
        </authorList>
    </citation>
    <scope>NUCLEOTIDE SEQUENCE [MRNA]</scope>
    <source>
        <tissue>Liver</tissue>
    </source>
</reference>
<reference key="2">
    <citation type="journal article" date="1989" name="J. Cell Sci. Suppl.">
        <title>Identification of immunoglobulin heavy chain binding protein as glucose-regulated protein 78 on the basis of amino acid sequence, immunological cross-reactivity, and functional activity.</title>
        <authorList>
            <person name="Kozutsumi Y."/>
            <person name="Normington K."/>
            <person name="Press E."/>
            <person name="Slaughter C."/>
            <person name="Sambrook J."/>
            <person name="Gething M.J."/>
        </authorList>
    </citation>
    <scope>NUCLEOTIDE SEQUENCE [MRNA]</scope>
    <scope>PROTEIN SEQUENCE OF 20-46</scope>
</reference>
<reference key="3">
    <citation type="journal article" date="1996" name="Biochem. Biophys. Res. Commun.">
        <title>Molecular characterization of seizure-related genes isolated by differential screening.</title>
        <authorList>
            <person name="Kajiwara K."/>
            <person name="Nagawawa H."/>
            <person name="Shimizu-Nishikawa K."/>
            <person name="Ookura T."/>
            <person name="Kimura M."/>
            <person name="Sugaya E."/>
        </authorList>
    </citation>
    <scope>NUCLEOTIDE SEQUENCE [MRNA]</scope>
    <source>
        <strain>C57BL/6J</strain>
        <tissue>Brain</tissue>
    </source>
</reference>
<reference key="4">
    <citation type="journal article" date="2005" name="Science">
        <title>The transcriptional landscape of the mammalian genome.</title>
        <authorList>
            <person name="Carninci P."/>
            <person name="Kasukawa T."/>
            <person name="Katayama S."/>
            <person name="Gough J."/>
            <person name="Frith M.C."/>
            <person name="Maeda N."/>
            <person name="Oyama R."/>
            <person name="Ravasi T."/>
            <person name="Lenhard B."/>
            <person name="Wells C."/>
            <person name="Kodzius R."/>
            <person name="Shimokawa K."/>
            <person name="Bajic V.B."/>
            <person name="Brenner S.E."/>
            <person name="Batalov S."/>
            <person name="Forrest A.R."/>
            <person name="Zavolan M."/>
            <person name="Davis M.J."/>
            <person name="Wilming L.G."/>
            <person name="Aidinis V."/>
            <person name="Allen J.E."/>
            <person name="Ambesi-Impiombato A."/>
            <person name="Apweiler R."/>
            <person name="Aturaliya R.N."/>
            <person name="Bailey T.L."/>
            <person name="Bansal M."/>
            <person name="Baxter L."/>
            <person name="Beisel K.W."/>
            <person name="Bersano T."/>
            <person name="Bono H."/>
            <person name="Chalk A.M."/>
            <person name="Chiu K.P."/>
            <person name="Choudhary V."/>
            <person name="Christoffels A."/>
            <person name="Clutterbuck D.R."/>
            <person name="Crowe M.L."/>
            <person name="Dalla E."/>
            <person name="Dalrymple B.P."/>
            <person name="de Bono B."/>
            <person name="Della Gatta G."/>
            <person name="di Bernardo D."/>
            <person name="Down T."/>
            <person name="Engstrom P."/>
            <person name="Fagiolini M."/>
            <person name="Faulkner G."/>
            <person name="Fletcher C.F."/>
            <person name="Fukushima T."/>
            <person name="Furuno M."/>
            <person name="Futaki S."/>
            <person name="Gariboldi M."/>
            <person name="Georgii-Hemming P."/>
            <person name="Gingeras T.R."/>
            <person name="Gojobori T."/>
            <person name="Green R.E."/>
            <person name="Gustincich S."/>
            <person name="Harbers M."/>
            <person name="Hayashi Y."/>
            <person name="Hensch T.K."/>
            <person name="Hirokawa N."/>
            <person name="Hill D."/>
            <person name="Huminiecki L."/>
            <person name="Iacono M."/>
            <person name="Ikeo K."/>
            <person name="Iwama A."/>
            <person name="Ishikawa T."/>
            <person name="Jakt M."/>
            <person name="Kanapin A."/>
            <person name="Katoh M."/>
            <person name="Kawasawa Y."/>
            <person name="Kelso J."/>
            <person name="Kitamura H."/>
            <person name="Kitano H."/>
            <person name="Kollias G."/>
            <person name="Krishnan S.P."/>
            <person name="Kruger A."/>
            <person name="Kummerfeld S.K."/>
            <person name="Kurochkin I.V."/>
            <person name="Lareau L.F."/>
            <person name="Lazarevic D."/>
            <person name="Lipovich L."/>
            <person name="Liu J."/>
            <person name="Liuni S."/>
            <person name="McWilliam S."/>
            <person name="Madan Babu M."/>
            <person name="Madera M."/>
            <person name="Marchionni L."/>
            <person name="Matsuda H."/>
            <person name="Matsuzawa S."/>
            <person name="Miki H."/>
            <person name="Mignone F."/>
            <person name="Miyake S."/>
            <person name="Morris K."/>
            <person name="Mottagui-Tabar S."/>
            <person name="Mulder N."/>
            <person name="Nakano N."/>
            <person name="Nakauchi H."/>
            <person name="Ng P."/>
            <person name="Nilsson R."/>
            <person name="Nishiguchi S."/>
            <person name="Nishikawa S."/>
            <person name="Nori F."/>
            <person name="Ohara O."/>
            <person name="Okazaki Y."/>
            <person name="Orlando V."/>
            <person name="Pang K.C."/>
            <person name="Pavan W.J."/>
            <person name="Pavesi G."/>
            <person name="Pesole G."/>
            <person name="Petrovsky N."/>
            <person name="Piazza S."/>
            <person name="Reed J."/>
            <person name="Reid J.F."/>
            <person name="Ring B.Z."/>
            <person name="Ringwald M."/>
            <person name="Rost B."/>
            <person name="Ruan Y."/>
            <person name="Salzberg S.L."/>
            <person name="Sandelin A."/>
            <person name="Schneider C."/>
            <person name="Schoenbach C."/>
            <person name="Sekiguchi K."/>
            <person name="Semple C.A."/>
            <person name="Seno S."/>
            <person name="Sessa L."/>
            <person name="Sheng Y."/>
            <person name="Shibata Y."/>
            <person name="Shimada H."/>
            <person name="Shimada K."/>
            <person name="Silva D."/>
            <person name="Sinclair B."/>
            <person name="Sperling S."/>
            <person name="Stupka E."/>
            <person name="Sugiura K."/>
            <person name="Sultana R."/>
            <person name="Takenaka Y."/>
            <person name="Taki K."/>
            <person name="Tammoja K."/>
            <person name="Tan S.L."/>
            <person name="Tang S."/>
            <person name="Taylor M.S."/>
            <person name="Tegner J."/>
            <person name="Teichmann S.A."/>
            <person name="Ueda H.R."/>
            <person name="van Nimwegen E."/>
            <person name="Verardo R."/>
            <person name="Wei C.L."/>
            <person name="Yagi K."/>
            <person name="Yamanishi H."/>
            <person name="Zabarovsky E."/>
            <person name="Zhu S."/>
            <person name="Zimmer A."/>
            <person name="Hide W."/>
            <person name="Bult C."/>
            <person name="Grimmond S.M."/>
            <person name="Teasdale R.D."/>
            <person name="Liu E.T."/>
            <person name="Brusic V."/>
            <person name="Quackenbush J."/>
            <person name="Wahlestedt C."/>
            <person name="Mattick J.S."/>
            <person name="Hume D.A."/>
            <person name="Kai C."/>
            <person name="Sasaki D."/>
            <person name="Tomaru Y."/>
            <person name="Fukuda S."/>
            <person name="Kanamori-Katayama M."/>
            <person name="Suzuki M."/>
            <person name="Aoki J."/>
            <person name="Arakawa T."/>
            <person name="Iida J."/>
            <person name="Imamura K."/>
            <person name="Itoh M."/>
            <person name="Kato T."/>
            <person name="Kawaji H."/>
            <person name="Kawagashira N."/>
            <person name="Kawashima T."/>
            <person name="Kojima M."/>
            <person name="Kondo S."/>
            <person name="Konno H."/>
            <person name="Nakano K."/>
            <person name="Ninomiya N."/>
            <person name="Nishio T."/>
            <person name="Okada M."/>
            <person name="Plessy C."/>
            <person name="Shibata K."/>
            <person name="Shiraki T."/>
            <person name="Suzuki S."/>
            <person name="Tagami M."/>
            <person name="Waki K."/>
            <person name="Watahiki A."/>
            <person name="Okamura-Oho Y."/>
            <person name="Suzuki H."/>
            <person name="Kawai J."/>
            <person name="Hayashizaki Y."/>
        </authorList>
    </citation>
    <scope>NUCLEOTIDE SEQUENCE [LARGE SCALE MRNA]</scope>
    <source>
        <strain>C57BL/6J</strain>
        <tissue>Kidney</tissue>
    </source>
</reference>
<reference key="5">
    <citation type="journal article" date="2004" name="Genome Res.">
        <title>The status, quality, and expansion of the NIH full-length cDNA project: the Mammalian Gene Collection (MGC).</title>
        <authorList>
            <consortium name="The MGC Project Team"/>
        </authorList>
    </citation>
    <scope>NUCLEOTIDE SEQUENCE [LARGE SCALE MRNA]</scope>
    <source>
        <strain>C57BL/6J</strain>
        <tissue>Brain</tissue>
    </source>
</reference>
<reference key="6">
    <citation type="journal article" date="1995" name="Gene">
        <title>Structure and regulation of the mouse GRP78 (BiP) promoter by glucose and calcium ionophore.</title>
        <authorList>
            <person name="Tillman J.B."/>
            <person name="Mote P.L."/>
            <person name="Walford R.L."/>
            <person name="Spindler S.R."/>
        </authorList>
    </citation>
    <scope>NUCLEOTIDE SEQUENCE [GENOMIC DNA] OF 1-28</scope>
    <source>
        <strain>C3B10RF1</strain>
        <tissue>Liver</tissue>
    </source>
</reference>
<reference key="7">
    <citation type="journal article" date="1994" name="Electrophoresis">
        <title>Separation and sequencing of familiar and novel murine proteins using preparative two-dimensional gel electrophoresis.</title>
        <authorList>
            <person name="Merrick B.A."/>
            <person name="Patterson R.M."/>
            <person name="Wichter L.L."/>
            <person name="He C."/>
            <person name="Selkirk J.K."/>
        </authorList>
    </citation>
    <scope>PROTEIN SEQUENCE OF 20-36</scope>
    <source>
        <tissue>Fibroblast</tissue>
    </source>
</reference>
<reference key="8">
    <citation type="submission" date="2007-07" db="UniProtKB">
        <authorList>
            <person name="Lubec G."/>
            <person name="Kang S.U."/>
            <person name="Klug S."/>
            <person name="Friebe K."/>
            <person name="Yang J.W."/>
            <person name="Zigmond M."/>
        </authorList>
    </citation>
    <scope>PROTEIN SEQUENCE OF 51-75; 140-153; 156-164; 166-182; 187-215; 308-337; 354-368; 449-493; 525-541 AND 623-634</scope>
    <scope>IDENTIFICATION BY MASS SPECTROMETRY</scope>
    <source>
        <strain>C57BL/6J</strain>
        <tissue>Brain</tissue>
        <tissue>Hippocampus</tissue>
    </source>
</reference>
<reference key="9">
    <citation type="journal article" date="1989" name="Gene">
        <title>Differential screening of a cDNA library with cDNA probes amplified in a heterologous host: isolation of murine GRP78 (BiP) and other serum-regulated low-abundance mRNAs.</title>
        <authorList>
            <person name="Parfett C.L.J."/>
            <person name="Hofbauer R."/>
            <person name="Brudzynski K."/>
            <person name="Edwards D.R."/>
            <person name="Denhardt D.T."/>
        </authorList>
    </citation>
    <scope>NUCLEOTIDE SEQUENCE [MRNA] OF 488-655</scope>
</reference>
<reference key="10">
    <citation type="journal article" date="2000" name="Nat. Cell Biol.">
        <title>Dynamic interaction of BiP and ER stress transducers in the unfolded-protein response.</title>
        <authorList>
            <person name="Bertolotti A."/>
            <person name="Zhang Y."/>
            <person name="Hendershot L.M."/>
            <person name="Harding H.P."/>
            <person name="Ron D."/>
        </authorList>
    </citation>
    <scope>FUNCTION</scope>
    <scope>INTERACTION WITH EIF2AK3</scope>
</reference>
<reference key="11">
    <citation type="journal article" date="2002" name="Mol. Biol. Cell">
        <title>A subset of chaperones and folding enzymes form multiprotein complexes in endoplasmic reticulum to bind nascent proteins.</title>
        <authorList>
            <person name="Meunier L."/>
            <person name="Usherwood Y.-K."/>
            <person name="Chung K.T."/>
            <person name="Hendershot L.M."/>
        </authorList>
    </citation>
    <scope>COMPONENT OF A CHAPERONE COMPLEX</scope>
</reference>
<reference key="12">
    <citation type="journal article" date="2002" name="EMBO J.">
        <title>A novel type of co-chaperone mediates transmembrane recruitment of DnaK-like chaperones to ribosomes.</title>
        <authorList>
            <person name="Dudek J."/>
            <person name="Volkmer J."/>
            <person name="Bies C."/>
            <person name="Guth S."/>
            <person name="Mueller A."/>
            <person name="Lerner M."/>
            <person name="Feick P."/>
            <person name="Schaefer K.-H."/>
            <person name="Morgenstern E."/>
            <person name="Hennessy F."/>
            <person name="Blatch G.L."/>
            <person name="Janoscheck K."/>
            <person name="Heim N."/>
            <person name="Scholtes P."/>
            <person name="Frien M."/>
            <person name="Nastainczyk W."/>
            <person name="Zimmermann R."/>
        </authorList>
    </citation>
    <scope>INTERACTION WITH DNAJC1</scope>
</reference>
<reference key="13">
    <citation type="journal article" date="2002" name="J. Biol. Chem.">
        <title>Identification and characterization of a novel endoplasmic reticulum (ER) DnaJ homologue, which stimulates ATPase activity of BiP in vitro and is induced by ER stress.</title>
        <authorList>
            <person name="Shen Y."/>
            <person name="Meunier L."/>
            <person name="Hendershot L.M."/>
        </authorList>
    </citation>
    <scope>INTERACTION WITH DNAJB9</scope>
</reference>
<reference key="14">
    <citation type="journal article" date="2003" name="J. Biol. Chem.">
        <title>ERdj5, an endoplasmic reticulum (ER)-resident protein containing DnaJ and thioredoxin domains, is expressed in secretory cells or following ER stress.</title>
        <authorList>
            <person name="Cunnea P.M."/>
            <person name="Miranda-Vizuete A."/>
            <person name="Bertoli G."/>
            <person name="Simmen T."/>
            <person name="Damdimopoulos A.E."/>
            <person name="Hermann S."/>
            <person name="Leinonen S."/>
            <person name="Huikko M.P."/>
            <person name="Gustafsson J.-A."/>
            <person name="Sitia R."/>
            <person name="Spyrou G."/>
        </authorList>
    </citation>
    <scope>FUNCTION</scope>
    <scope>INTERACTION WITH DNAJC10</scope>
</reference>
<reference key="15">
    <citation type="journal article" date="2006" name="Biochemistry">
        <title>Endogenously nitrated proteins in mouse brain: links to neurodegenerative disease.</title>
        <authorList>
            <person name="Sacksteder C.A."/>
            <person name="Qian W.-J."/>
            <person name="Knyushko T.V."/>
            <person name="Wang H."/>
            <person name="Chin M.H."/>
            <person name="Lacan G."/>
            <person name="Melega W.P."/>
            <person name="Camp D.G. II"/>
            <person name="Smith R.D."/>
            <person name="Smith D.J."/>
            <person name="Squier T.C."/>
            <person name="Bigelow D.J."/>
        </authorList>
    </citation>
    <scope>NITRATION [LARGE SCALE ANALYSIS] AT TYR-161</scope>
    <scope>IDENTIFICATION BY MASS SPECTROMETRY [LARGE SCALE ANALYSIS]</scope>
    <source>
        <tissue>Brain</tissue>
    </source>
</reference>
<reference key="16">
    <citation type="journal article" date="2006" name="J. Biol. Chem.">
        <title>Age-specific CUGBP1-eIF2 complex increases translation of CCAAT/enhancer-binding protein beta in old liver.</title>
        <authorList>
            <person name="Timchenko L.T."/>
            <person name="Salisbury E."/>
            <person name="Wang G.-L."/>
            <person name="Nguyen H."/>
            <person name="Albrecht J.H."/>
            <person name="Hershey J.W."/>
            <person name="Timchenko N.A."/>
        </authorList>
    </citation>
    <scope>IDENTIFICATION IN AN EIF2 COMPLEX WITH EIF2S1; EIF2S2; CELF1; CALR; CALR3 AND HSP90B1</scope>
</reference>
<reference key="17">
    <citation type="journal article" date="2007" name="Proc. Natl. Acad. Sci. U.S.A.">
        <title>Large-scale phosphorylation analysis of mouse liver.</title>
        <authorList>
            <person name="Villen J."/>
            <person name="Beausoleil S.A."/>
            <person name="Gerber S.A."/>
            <person name="Gygi S.P."/>
        </authorList>
    </citation>
    <scope>PHOSPHORYLATION [LARGE SCALE ANALYSIS] AT SER-650</scope>
    <scope>IDENTIFICATION BY MASS SPECTROMETRY [LARGE SCALE ANALYSIS]</scope>
    <source>
        <tissue>Liver</tissue>
    </source>
</reference>
<reference key="18">
    <citation type="journal article" date="2009" name="Immunity">
        <title>The phagosomal proteome in interferon-gamma-activated macrophages.</title>
        <authorList>
            <person name="Trost M."/>
            <person name="English L."/>
            <person name="Lemieux S."/>
            <person name="Courcelles M."/>
            <person name="Desjardins M."/>
            <person name="Thibault P."/>
        </authorList>
    </citation>
    <scope>IDENTIFICATION BY MASS SPECTROMETRY [LARGE SCALE ANALYSIS]</scope>
</reference>
<reference key="19">
    <citation type="journal article" date="2010" name="Cell">
        <title>A tissue-specific atlas of mouse protein phosphorylation and expression.</title>
        <authorList>
            <person name="Huttlin E.L."/>
            <person name="Jedrychowski M.P."/>
            <person name="Elias J.E."/>
            <person name="Goswami T."/>
            <person name="Rad R."/>
            <person name="Beausoleil S.A."/>
            <person name="Villen J."/>
            <person name="Haas W."/>
            <person name="Sowa M.E."/>
            <person name="Gygi S.P."/>
        </authorList>
    </citation>
    <scope>PHOSPHORYLATION [LARGE SCALE ANALYSIS] AT THR-644; THR-649 AND SER-650</scope>
    <scope>IDENTIFICATION BY MASS SPECTROMETRY [LARGE SCALE ANALYSIS]</scope>
    <source>
        <tissue>Brain</tissue>
        <tissue>Brown adipose tissue</tissue>
        <tissue>Heart</tissue>
        <tissue>Kidney</tissue>
        <tissue>Liver</tissue>
        <tissue>Lung</tissue>
        <tissue>Pancreas</tissue>
        <tissue>Spleen</tissue>
        <tissue>Testis</tissue>
    </source>
</reference>
<reference key="20">
    <citation type="journal article" date="2010" name="J. Clin. Invest.">
        <title>The endothelial cell receptor GRP78 is required for mucormycosis pathogenesis in diabetic mice.</title>
        <authorList>
            <person name="Liu M."/>
            <person name="Spellberg B."/>
            <person name="Phan Q.T."/>
            <person name="Fu Y."/>
            <person name="Fu Y."/>
            <person name="Lee A.S."/>
            <person name="Edwards J.E. Jr."/>
            <person name="Filler S.G."/>
            <person name="Ibrahim A.S."/>
        </authorList>
    </citation>
    <scope>INDUCTION</scope>
</reference>
<reference key="21">
    <citation type="journal article" date="2011" name="J. Cell. Physiol.">
        <title>Identification of heat shock protein 5, calnexin and integral membrane protein 2B as Adam7-interacting membrane proteins in mouse sperm.</title>
        <authorList>
            <person name="Han C."/>
            <person name="Park I."/>
            <person name="Lee B."/>
            <person name="Jin S."/>
            <person name="Choi H."/>
            <person name="Kwon J.T."/>
            <person name="Kwon Y.I."/>
            <person name="Kim D.H."/>
            <person name="Park Z.Y."/>
            <person name="Cho C."/>
        </authorList>
    </citation>
    <scope>INTERACTION WITH ADAM7</scope>
    <scope>TISSUE SPECIFICITY</scope>
</reference>
<reference key="22">
    <citation type="journal article" date="2011" name="J. Interferon Cytokine Res.">
        <title>Interferon-inducible antiviral protein MxA enhances cell death triggered by endoplasmic reticulum stress.</title>
        <authorList>
            <person name="Numajiri Haruki A."/>
            <person name="Naito T."/>
            <person name="Nishie T."/>
            <person name="Saito S."/>
            <person name="Nagata K."/>
        </authorList>
    </citation>
    <scope>SUBCELLULAR LOCATION</scope>
    <scope>INTERACTION WITH MX1</scope>
</reference>
<reference key="23">
    <citation type="journal article" date="2013" name="J. Biol. Chem.">
        <title>Identification and characterization of a novel human methyltransferase modulating Hsp70 function through lysine methylation.</title>
        <authorList>
            <person name="Jakobsson M.E."/>
            <person name="Moen A."/>
            <person name="Bousset L."/>
            <person name="Egge-Jacobsen W."/>
            <person name="Kernstock S."/>
            <person name="Melki R."/>
            <person name="Falnes P.O."/>
        </authorList>
    </citation>
    <scope>METHYLATION AT LYS-586</scope>
</reference>
<reference key="24">
    <citation type="journal article" date="2013" name="Mol. Cell">
        <title>SIRT5-mediated lysine desuccinylation impacts diverse metabolic pathways.</title>
        <authorList>
            <person name="Park J."/>
            <person name="Chen Y."/>
            <person name="Tishkoff D.X."/>
            <person name="Peng C."/>
            <person name="Tan M."/>
            <person name="Dai L."/>
            <person name="Xie Z."/>
            <person name="Zhang Y."/>
            <person name="Zwaans B.M."/>
            <person name="Skinner M.E."/>
            <person name="Lombard D.B."/>
            <person name="Zhao Y."/>
        </authorList>
    </citation>
    <scope>ACETYLATION [LARGE SCALE ANALYSIS] AT LYS-126; LYS-214; LYS-327 AND LYS-354</scope>
    <scope>SUCCINYLATION [LARGE SCALE ANALYSIS] AT LYS-448</scope>
    <scope>IDENTIFICATION BY MASS SPECTROMETRY [LARGE SCALE ANALYSIS]</scope>
    <source>
        <tissue>Embryonic fibroblast</tissue>
    </source>
</reference>
<reference key="25">
    <citation type="journal article" date="2014" name="Dev. Biol.">
        <title>Contribution of calumin to embryogenesis through participation in the endoplasmic reticulum-associated degradation activity.</title>
        <authorList>
            <person name="Yamamoto S."/>
            <person name="Yamazaki T."/>
            <person name="Komazaki S."/>
            <person name="Yamashita T."/>
            <person name="Osaki M."/>
            <person name="Matsubayashi M."/>
            <person name="Kidoya H."/>
            <person name="Takakura N."/>
            <person name="Yamazaki D."/>
            <person name="Kakizawa S."/>
        </authorList>
    </citation>
    <scope>INTERACTION WITH CCDC47</scope>
</reference>
<reference key="26">
    <citation type="journal article" date="2016" name="J. Clin. Invest.">
        <title>Bicarbonate correction of ketoacidosis alters host-pathogen interactions and alleviates mucormycosis.</title>
        <authorList>
            <person name="Gebremariam T."/>
            <person name="Lin L."/>
            <person name="Liu M."/>
            <person name="Kontoyiannis D.P."/>
            <person name="French S."/>
            <person name="Edwards J.E. Jr."/>
            <person name="Filler S.G."/>
            <person name="Ibrahim A.S."/>
        </authorList>
    </citation>
    <scope>INDUCTION</scope>
</reference>
<reference key="27">
    <citation type="journal article" date="2021" name="Sci. Rep.">
        <title>ILDR2 stabilization is regulated by its interaction with GRP78.</title>
        <authorList>
            <person name="Watanabe K."/>
            <person name="Nakayama K."/>
            <person name="Ohta S."/>
            <person name="Matsumoto A."/>
            <person name="Tsuda H."/>
            <person name="Iwamoto S."/>
        </authorList>
    </citation>
    <scope>INTERACTION WITH ILDR2</scope>
</reference>
<comment type="function">
    <text evidence="1 4 9 10">Endoplasmic reticulum chaperone that plays a key role in protein folding and quality control in the endoplasmic reticulum lumen (PubMed:12411443, PubMed:12475965). Involved in the correct folding of proteins and degradation of misfolded proteins via its interaction with DNAJC10/ERdj5, probably to facilitate the release of DNAJC10/ERdj5 from its substrate (PubMed:12411443). Acts as a key repressor of the EIF2AK3/PERK and ERN1/IRE1-mediated unfolded protein response (UPR) (PubMed:10854322). In the unstressed endoplasmic reticulum, recruited by DNAJB9/ERdj4 to the luminal region of ERN1/IRE1, leading to disrupt the dimerization of ERN1/IRE1, thereby inactivating ERN1/IRE1 (By similarity). Also binds and inactivates EIF2AK3/PERK in unstressed cells (PubMed:10854322). Accumulation of misfolded protein in the endoplasmic reticulum causes release of HSPA5/BiP from ERN1/IRE1 and EIF2AK3/PERK, allowing their homodimerization and subsequent activation (PubMed:10854322). Plays an auxiliary role in post-translational transport of small presecretory proteins across endoplasmic reticulum (ER). May function as an allosteric modulator for SEC61 channel-forming translocon complex, likely cooperating with SEC62 to enable the productive insertion of these precursors into SEC61 channel. Appears to specifically regulate translocation of precursors having inhibitory residues in their mature region that weaken channel gating. May also play a role in apoptosis and cell proliferation (By similarity).</text>
</comment>
<comment type="catalytic activity">
    <reaction evidence="1">
        <text>ATP + H2O = ADP + phosphate + H(+)</text>
        <dbReference type="Rhea" id="RHEA:13065"/>
        <dbReference type="ChEBI" id="CHEBI:15377"/>
        <dbReference type="ChEBI" id="CHEBI:15378"/>
        <dbReference type="ChEBI" id="CHEBI:30616"/>
        <dbReference type="ChEBI" id="CHEBI:43474"/>
        <dbReference type="ChEBI" id="CHEBI:456216"/>
        <dbReference type="EC" id="3.6.4.10"/>
    </reaction>
</comment>
<comment type="activity regulation">
    <text evidence="1 4">The chaperone activity is regulated by ATP-induced allosteric coupling of the nucleotide-binding (NBD) and substrate-binding (SBD) domains (By similarity). In the ADP-bound and nucleotide-free (apo) states, the two domains have little interaction (By similarity). In contrast, in the ATP-bound state the two domains are tightly coupled, which results in drastically accelerated kinetics in both binding and release of polypeptide substrates (By similarity). J domain-containing co-chaperones (DNAJB9/ERdj4 or DNAJC10/ERdj5) stimulate the ATPase activity and are required for efficient substrate recognition by HSPA5/BiP. Homooligomerization inactivates participating HSPA5/BiP protomers and probably act as reservoirs to store HSPA5/BiP molecules when they are not needed by the cell (By similarity).</text>
</comment>
<comment type="subunit">
    <text evidence="1 4 7 8 9 10 11 13 14 16 19">Monomer and homooligomer; homooligomerization via the interdomain linker inactivates the chaperone activity and acts as a storage of HSPA5/BiP molecules (By similarity). Interacts with DNAJC1 (via J domain) (PubMed:12065409). Component of an EIF2 complex at least composed of CELF1/CUGBP1, CALR, CALR3, EIF2S1, EIF2S2, HSP90B1 and HSPA5 (PubMed:16931514). Part of a large chaperone multiprotein complex comprising DNAJB11, HSP90B1, HSPA5, HYOU, PDIA2, PDIA4, PDIA6, PPIB, SDF2L1, UGGT1 and very small amounts of ERP29, but not, or at very low levels, CALR nor CANX (PubMed:12475965). Interacts with TMEM132A and TRIM21 (By similarity). May form a complex with ERLEC1, OS9, SEL1L and SYVN1 (By similarity). Interacts with DNAJC10 (PubMed:12411443). Interacts with DNAJB9/ERdj4; leading to recruit HSPA5/BiP to ERN1/IRE1 (PubMed:11836248). Interacts with ERN1/IRE1 (via luminal domain); the interaction takes place following interaction with DNAJB9/ERdj4 and leads to inactivate ERN1/IRE1, the interaction also competitively inhibits ERN1 interaction with MANF (By similarity). Interacts directly with MANF (via SAP domain); the interaction inhibits ATP binding to HSPA5/BiP and subsequent nucleotide exchange (By similarity). Interacts with ERN1 (via luminal domain); the interaction competitively inhibits ERN1 interaction with MANF (By similarity). Interacts with EIF2AK3/PERK (via luminal domain); interaction leads to inactivate EIF2AK3/PERK. Interacts with MX1 (PubMed:21992152). Interacts with METTL23 (By similarity). Interacts with CEMIP; the interaction induces calcium leakage from the endoplasmic reticulum and cell migration (By similarity). Interacts with PCSK4 form; the interaction takes place in the endoplasmic reticulum (By similarity). Interacts with CIPC (By similarity). Interacts with CCDC88B (via C-terminus); the interaction opposes ERN1-mediated JNK activation, protecting against apoptosis (By similarity). Interacts with INPP5K; necessary for INPP5K localization at the endoplasmic reticulum (By similarity). Interacts with MANF; the interaction is direct (By similarity). Interacts with LOXL2; leading to activate the ERN1/IRE1-XBP1 pathway of the unfolded protein response (By similarity). Interacts with CLU under stressed condition; interaction increases CLU protein stability; facilitates its retrotranslocation and redistribution to the mitochondria; cooperatively suppress stress-induced apoptosis by stabilizing mitochondrial membrane integrity (By similarity). Interacts with CCDC47 (PubMed:25009997). Interacts with CLN3 (By similarity). Interacts with ELAPOR1; may regulate the function of HSPA5 in apoptosis and cell proliferation. Interacts with CASP7 (By similarity). Interacts with ILDR2; the interaction stabilizes ILDR2 expression (PubMed:33863978). Interacts with ADAM7 (PubMed:20945367).</text>
</comment>
<comment type="interaction">
    <interactant intactId="EBI-772325">
        <id>P20029</id>
    </interactant>
    <interactant intactId="EBI-8361741">
        <id>O35451</id>
        <label>Atf6b</label>
    </interactant>
    <organismsDiffer>false</organismsDiffer>
    <experiments>2</experiments>
</comment>
<comment type="interaction">
    <interactant intactId="EBI-772325">
        <id>P20029</id>
    </interactant>
    <interactant intactId="EBI-8328260">
        <id>Q99KV1</id>
        <label>Dnajb11</label>
    </interactant>
    <organismsDiffer>false</organismsDiffer>
    <experiments>4</experiments>
</comment>
<comment type="interaction">
    <interactant intactId="EBI-772325">
        <id>P20029</id>
    </interactant>
    <interactant intactId="EBI-371750">
        <id>O75460</id>
        <label>ERN1</label>
    </interactant>
    <organismsDiffer>true</organismsDiffer>
    <experiments>2</experiments>
</comment>
<comment type="interaction">
    <interactant intactId="EBI-772325">
        <id>P20029</id>
    </interactant>
    <interactant intactId="EBI-990792">
        <id>P00441</id>
        <label>SOD1</label>
    </interactant>
    <organismsDiffer>true</organismsDiffer>
    <experiments>7</experiments>
</comment>
<comment type="subcellular location">
    <subcellularLocation>
        <location evidence="5 14">Endoplasmic reticulum lumen</location>
    </subcellularLocation>
    <subcellularLocation>
        <location evidence="4">Melanosome</location>
    </subcellularLocation>
    <subcellularLocation>
        <location evidence="14">Cytoplasm</location>
    </subcellularLocation>
    <subcellularLocation>
        <location>Cell surface</location>
    </subcellularLocation>
    <text evidence="4">Identified by mass spectrometry in melanosome fractions from stage I to stage IV (By similarity). Localizes to the cell surface in epithelial cells; high levels of free iron promotes cell surface localization (By similarity).</text>
</comment>
<comment type="tissue specificity">
    <text evidence="13">Expressed in sperm (at protein level).</text>
</comment>
<comment type="induction">
    <text evidence="12 18">Induced in sinus, lung and brain tissue in response to 3-hydroxybutyric acid (BHB)-induced acidosis (PubMed:27159390). Induced in sinus, lung and brain tissue following intraperitoneal injection of streptozotocin to produce a mouse model of diabetic ketoacidosis (DKA) (PubMed:20484814).</text>
</comment>
<comment type="domain">
    <text evidence="1">The interdomain linker regulates the chaperone activity by mediating the formation of homooligomers. Homooligomers are formed by engagement of the interdomain linker of one HSPA5/BiP molecule as a typical substrate of an adjacent HSPA5/BiP molecule. HSPA5/BiP oligomerization inactivates participating HSPA5/BiP protomers. HSPA5/BiP oligomers probably act as reservoirs to store HSPA5/BiP molecules when they are not needed by the cell. When the levels of unfolded proteins rise, cells can rapidly break up these oligomers to make active monomers.</text>
</comment>
<comment type="PTM">
    <text evidence="1">In unstressed cells, AMPylation at Thr-519 by FICD inactivates the chaperome activity: AMPylated form is locked in a relatively inert state and only weakly stimulated by J domain-containing proteins. In response to endoplasmic reticulum stress, de-AMPylation by the same protein, FICD, restores the chaperone activity.</text>
</comment>
<comment type="similarity">
    <text evidence="23">Belongs to the heat shock protein 70 family.</text>
</comment>
<accession>P20029</accession>
<accession>O35642</accession>
<accession>Q3UFF2</accession>
<accession>Q61630</accession>
<proteinExistence type="evidence at protein level"/>